<keyword id="KW-0210">Decarboxylase</keyword>
<keyword id="KW-0456">Lyase</keyword>
<keyword id="KW-0665">Pyrimidine biosynthesis</keyword>
<keyword id="KW-1185">Reference proteome</keyword>
<reference key="1">
    <citation type="journal article" date="2004" name="Proc. Natl. Acad. Sci. U.S.A.">
        <title>Genome sequence of the enterobacterial phytopathogen Erwinia carotovora subsp. atroseptica and characterization of virulence factors.</title>
        <authorList>
            <person name="Bell K.S."/>
            <person name="Sebaihia M."/>
            <person name="Pritchard L."/>
            <person name="Holden M.T.G."/>
            <person name="Hyman L.J."/>
            <person name="Holeva M.C."/>
            <person name="Thomson N.R."/>
            <person name="Bentley S.D."/>
            <person name="Churcher L.J.C."/>
            <person name="Mungall K."/>
            <person name="Atkin R."/>
            <person name="Bason N."/>
            <person name="Brooks K."/>
            <person name="Chillingworth T."/>
            <person name="Clark K."/>
            <person name="Doggett J."/>
            <person name="Fraser A."/>
            <person name="Hance Z."/>
            <person name="Hauser H."/>
            <person name="Jagels K."/>
            <person name="Moule S."/>
            <person name="Norbertczak H."/>
            <person name="Ormond D."/>
            <person name="Price C."/>
            <person name="Quail M.A."/>
            <person name="Sanders M."/>
            <person name="Walker D."/>
            <person name="Whitehead S."/>
            <person name="Salmond G.P.C."/>
            <person name="Birch P.R.J."/>
            <person name="Parkhill J."/>
            <person name="Toth I.K."/>
        </authorList>
    </citation>
    <scope>NUCLEOTIDE SEQUENCE [LARGE SCALE GENOMIC DNA]</scope>
    <source>
        <strain>SCRI 1043 / ATCC BAA-672</strain>
    </source>
</reference>
<proteinExistence type="inferred from homology"/>
<feature type="chain" id="PRO_0000241858" description="Orotidine 5'-phosphate decarboxylase">
    <location>
        <begin position="1"/>
        <end position="247"/>
    </location>
</feature>
<feature type="active site" description="Proton donor" evidence="1">
    <location>
        <position position="73"/>
    </location>
</feature>
<feature type="binding site" evidence="1">
    <location>
        <position position="22"/>
    </location>
    <ligand>
        <name>substrate</name>
    </ligand>
</feature>
<feature type="binding site" evidence="1">
    <location>
        <position position="44"/>
    </location>
    <ligand>
        <name>substrate</name>
    </ligand>
</feature>
<feature type="binding site" evidence="1">
    <location>
        <begin position="71"/>
        <end position="80"/>
    </location>
    <ligand>
        <name>substrate</name>
    </ligand>
</feature>
<feature type="binding site" evidence="1">
    <location>
        <position position="131"/>
    </location>
    <ligand>
        <name>substrate</name>
    </ligand>
</feature>
<feature type="binding site" evidence="1">
    <location>
        <position position="192"/>
    </location>
    <ligand>
        <name>substrate</name>
    </ligand>
</feature>
<feature type="binding site" evidence="1">
    <location>
        <position position="201"/>
    </location>
    <ligand>
        <name>substrate</name>
    </ligand>
</feature>
<feature type="binding site" evidence="1">
    <location>
        <position position="221"/>
    </location>
    <ligand>
        <name>substrate</name>
    </ligand>
</feature>
<feature type="binding site" evidence="1">
    <location>
        <position position="222"/>
    </location>
    <ligand>
        <name>substrate</name>
    </ligand>
</feature>
<name>PYRF_PECAS</name>
<protein>
    <recommendedName>
        <fullName evidence="1">Orotidine 5'-phosphate decarboxylase</fullName>
        <ecNumber evidence="1">4.1.1.23</ecNumber>
    </recommendedName>
    <alternativeName>
        <fullName evidence="1">OMP decarboxylase</fullName>
        <shortName evidence="1">OMPDCase</shortName>
        <shortName evidence="1">OMPdecase</shortName>
    </alternativeName>
</protein>
<sequence length="247" mass="26481">MKNENLQQKNQTVSSPIVVALDYASQDAALSFVDRIDPQDCRLKVGKEMFTLFGPQFVQTLQQRGFDVFLDLKFHDIPNTVAHAVAAAADLGVWMVNVHASGGSRMMAAAKDALVPFGKDAPLLIAVTVLTSMDEEDLRGLGITVSPAEQAERLAVLTHNSGLDGVVCSAHEAQRLKQVCGQAFKLITPGIRPAGSDVGDQRRIMTPIQAQQAGVDYMVIGRPITQSSDPAQTLCDIRASLLNGIAS</sequence>
<evidence type="ECO:0000255" key="1">
    <source>
        <dbReference type="HAMAP-Rule" id="MF_01200"/>
    </source>
</evidence>
<dbReference type="EC" id="4.1.1.23" evidence="1"/>
<dbReference type="EMBL" id="BX950851">
    <property type="protein sequence ID" value="CAG74859.1"/>
    <property type="molecule type" value="Genomic_DNA"/>
</dbReference>
<dbReference type="RefSeq" id="WP_011093521.1">
    <property type="nucleotide sequence ID" value="NC_004547.2"/>
</dbReference>
<dbReference type="SMR" id="Q6D5T3"/>
<dbReference type="STRING" id="218491.ECA1957"/>
<dbReference type="KEGG" id="eca:ECA1957"/>
<dbReference type="PATRIC" id="fig|218491.5.peg.1990"/>
<dbReference type="eggNOG" id="COG0284">
    <property type="taxonomic scope" value="Bacteria"/>
</dbReference>
<dbReference type="HOGENOM" id="CLU_067069_0_0_6"/>
<dbReference type="OrthoDB" id="9806203at2"/>
<dbReference type="UniPathway" id="UPA00070">
    <property type="reaction ID" value="UER00120"/>
</dbReference>
<dbReference type="Proteomes" id="UP000007966">
    <property type="component" value="Chromosome"/>
</dbReference>
<dbReference type="GO" id="GO:0005829">
    <property type="term" value="C:cytosol"/>
    <property type="evidence" value="ECO:0007669"/>
    <property type="project" value="TreeGrafter"/>
</dbReference>
<dbReference type="GO" id="GO:0004590">
    <property type="term" value="F:orotidine-5'-phosphate decarboxylase activity"/>
    <property type="evidence" value="ECO:0007669"/>
    <property type="project" value="UniProtKB-UniRule"/>
</dbReference>
<dbReference type="GO" id="GO:0006207">
    <property type="term" value="P:'de novo' pyrimidine nucleobase biosynthetic process"/>
    <property type="evidence" value="ECO:0007669"/>
    <property type="project" value="InterPro"/>
</dbReference>
<dbReference type="GO" id="GO:0044205">
    <property type="term" value="P:'de novo' UMP biosynthetic process"/>
    <property type="evidence" value="ECO:0007669"/>
    <property type="project" value="UniProtKB-UniRule"/>
</dbReference>
<dbReference type="CDD" id="cd04725">
    <property type="entry name" value="OMP_decarboxylase_like"/>
    <property type="match status" value="1"/>
</dbReference>
<dbReference type="FunFam" id="3.20.20.70:FF:000015">
    <property type="entry name" value="Orotidine 5'-phosphate decarboxylase"/>
    <property type="match status" value="1"/>
</dbReference>
<dbReference type="Gene3D" id="3.20.20.70">
    <property type="entry name" value="Aldolase class I"/>
    <property type="match status" value="1"/>
</dbReference>
<dbReference type="HAMAP" id="MF_01200_B">
    <property type="entry name" value="OMPdecase_type1_B"/>
    <property type="match status" value="1"/>
</dbReference>
<dbReference type="InterPro" id="IPR013785">
    <property type="entry name" value="Aldolase_TIM"/>
</dbReference>
<dbReference type="InterPro" id="IPR014732">
    <property type="entry name" value="OMPdecase"/>
</dbReference>
<dbReference type="InterPro" id="IPR018089">
    <property type="entry name" value="OMPdecase_AS"/>
</dbReference>
<dbReference type="InterPro" id="IPR047596">
    <property type="entry name" value="OMPdecase_bac"/>
</dbReference>
<dbReference type="InterPro" id="IPR001754">
    <property type="entry name" value="OMPdeCOase_dom"/>
</dbReference>
<dbReference type="InterPro" id="IPR011060">
    <property type="entry name" value="RibuloseP-bd_barrel"/>
</dbReference>
<dbReference type="NCBIfam" id="NF001273">
    <property type="entry name" value="PRK00230.1"/>
    <property type="match status" value="1"/>
</dbReference>
<dbReference type="NCBIfam" id="TIGR01740">
    <property type="entry name" value="pyrF"/>
    <property type="match status" value="1"/>
</dbReference>
<dbReference type="PANTHER" id="PTHR32119">
    <property type="entry name" value="OROTIDINE 5'-PHOSPHATE DECARBOXYLASE"/>
    <property type="match status" value="1"/>
</dbReference>
<dbReference type="PANTHER" id="PTHR32119:SF2">
    <property type="entry name" value="OROTIDINE 5'-PHOSPHATE DECARBOXYLASE"/>
    <property type="match status" value="1"/>
</dbReference>
<dbReference type="Pfam" id="PF00215">
    <property type="entry name" value="OMPdecase"/>
    <property type="match status" value="1"/>
</dbReference>
<dbReference type="SMART" id="SM00934">
    <property type="entry name" value="OMPdecase"/>
    <property type="match status" value="1"/>
</dbReference>
<dbReference type="SUPFAM" id="SSF51366">
    <property type="entry name" value="Ribulose-phoshate binding barrel"/>
    <property type="match status" value="1"/>
</dbReference>
<dbReference type="PROSITE" id="PS00156">
    <property type="entry name" value="OMPDECASE"/>
    <property type="match status" value="1"/>
</dbReference>
<comment type="function">
    <text evidence="1">Catalyzes the decarboxylation of orotidine 5'-monophosphate (OMP) to uridine 5'-monophosphate (UMP).</text>
</comment>
<comment type="catalytic activity">
    <reaction evidence="1">
        <text>orotidine 5'-phosphate + H(+) = UMP + CO2</text>
        <dbReference type="Rhea" id="RHEA:11596"/>
        <dbReference type="ChEBI" id="CHEBI:15378"/>
        <dbReference type="ChEBI" id="CHEBI:16526"/>
        <dbReference type="ChEBI" id="CHEBI:57538"/>
        <dbReference type="ChEBI" id="CHEBI:57865"/>
        <dbReference type="EC" id="4.1.1.23"/>
    </reaction>
</comment>
<comment type="pathway">
    <text evidence="1">Pyrimidine metabolism; UMP biosynthesis via de novo pathway; UMP from orotate: step 2/2.</text>
</comment>
<comment type="subunit">
    <text evidence="1">Homodimer.</text>
</comment>
<comment type="similarity">
    <text evidence="1">Belongs to the OMP decarboxylase family. Type 1 subfamily.</text>
</comment>
<gene>
    <name evidence="1" type="primary">pyrF</name>
    <name type="ordered locus">ECA1957</name>
</gene>
<accession>Q6D5T3</accession>
<organism>
    <name type="scientific">Pectobacterium atrosepticum (strain SCRI 1043 / ATCC BAA-672)</name>
    <name type="common">Erwinia carotovora subsp. atroseptica</name>
    <dbReference type="NCBI Taxonomy" id="218491"/>
    <lineage>
        <taxon>Bacteria</taxon>
        <taxon>Pseudomonadati</taxon>
        <taxon>Pseudomonadota</taxon>
        <taxon>Gammaproteobacteria</taxon>
        <taxon>Enterobacterales</taxon>
        <taxon>Pectobacteriaceae</taxon>
        <taxon>Pectobacterium</taxon>
    </lineage>
</organism>